<dbReference type="EMBL" id="CP000746">
    <property type="protein sequence ID" value="ABR74851.1"/>
    <property type="molecule type" value="Genomic_DNA"/>
</dbReference>
<dbReference type="RefSeq" id="WP_012073228.1">
    <property type="nucleotide sequence ID" value="NC_009655.1"/>
</dbReference>
<dbReference type="SMR" id="A6VPF4"/>
<dbReference type="STRING" id="339671.Asuc_1493"/>
<dbReference type="KEGG" id="asu:Asuc_1493"/>
<dbReference type="eggNOG" id="COG0103">
    <property type="taxonomic scope" value="Bacteria"/>
</dbReference>
<dbReference type="HOGENOM" id="CLU_046483_2_1_6"/>
<dbReference type="OrthoDB" id="9803965at2"/>
<dbReference type="Proteomes" id="UP000001114">
    <property type="component" value="Chromosome"/>
</dbReference>
<dbReference type="GO" id="GO:0022627">
    <property type="term" value="C:cytosolic small ribosomal subunit"/>
    <property type="evidence" value="ECO:0007669"/>
    <property type="project" value="TreeGrafter"/>
</dbReference>
<dbReference type="GO" id="GO:0003723">
    <property type="term" value="F:RNA binding"/>
    <property type="evidence" value="ECO:0007669"/>
    <property type="project" value="TreeGrafter"/>
</dbReference>
<dbReference type="GO" id="GO:0003735">
    <property type="term" value="F:structural constituent of ribosome"/>
    <property type="evidence" value="ECO:0007669"/>
    <property type="project" value="InterPro"/>
</dbReference>
<dbReference type="GO" id="GO:0006412">
    <property type="term" value="P:translation"/>
    <property type="evidence" value="ECO:0007669"/>
    <property type="project" value="UniProtKB-UniRule"/>
</dbReference>
<dbReference type="FunFam" id="3.30.230.10:FF:000001">
    <property type="entry name" value="30S ribosomal protein S9"/>
    <property type="match status" value="1"/>
</dbReference>
<dbReference type="Gene3D" id="3.30.230.10">
    <property type="match status" value="1"/>
</dbReference>
<dbReference type="HAMAP" id="MF_00532_B">
    <property type="entry name" value="Ribosomal_uS9_B"/>
    <property type="match status" value="1"/>
</dbReference>
<dbReference type="InterPro" id="IPR020568">
    <property type="entry name" value="Ribosomal_Su5_D2-typ_SF"/>
</dbReference>
<dbReference type="InterPro" id="IPR000754">
    <property type="entry name" value="Ribosomal_uS9"/>
</dbReference>
<dbReference type="InterPro" id="IPR023035">
    <property type="entry name" value="Ribosomal_uS9_bac/plastid"/>
</dbReference>
<dbReference type="InterPro" id="IPR020574">
    <property type="entry name" value="Ribosomal_uS9_CS"/>
</dbReference>
<dbReference type="InterPro" id="IPR014721">
    <property type="entry name" value="Ribsml_uS5_D2-typ_fold_subgr"/>
</dbReference>
<dbReference type="NCBIfam" id="NF001099">
    <property type="entry name" value="PRK00132.1"/>
    <property type="match status" value="1"/>
</dbReference>
<dbReference type="PANTHER" id="PTHR21569">
    <property type="entry name" value="RIBOSOMAL PROTEIN S9"/>
    <property type="match status" value="1"/>
</dbReference>
<dbReference type="PANTHER" id="PTHR21569:SF1">
    <property type="entry name" value="SMALL RIBOSOMAL SUBUNIT PROTEIN US9M"/>
    <property type="match status" value="1"/>
</dbReference>
<dbReference type="Pfam" id="PF00380">
    <property type="entry name" value="Ribosomal_S9"/>
    <property type="match status" value="1"/>
</dbReference>
<dbReference type="SUPFAM" id="SSF54211">
    <property type="entry name" value="Ribosomal protein S5 domain 2-like"/>
    <property type="match status" value="1"/>
</dbReference>
<dbReference type="PROSITE" id="PS00360">
    <property type="entry name" value="RIBOSOMAL_S9"/>
    <property type="match status" value="1"/>
</dbReference>
<feature type="chain" id="PRO_1000072515" description="Small ribosomal subunit protein uS9">
    <location>
        <begin position="1"/>
        <end position="131"/>
    </location>
</feature>
<evidence type="ECO:0000255" key="1">
    <source>
        <dbReference type="HAMAP-Rule" id="MF_00532"/>
    </source>
</evidence>
<evidence type="ECO:0000305" key="2"/>
<reference key="1">
    <citation type="journal article" date="2010" name="BMC Genomics">
        <title>A genomic perspective on the potential of Actinobacillus succinogenes for industrial succinate production.</title>
        <authorList>
            <person name="McKinlay J.B."/>
            <person name="Laivenieks M."/>
            <person name="Schindler B.D."/>
            <person name="McKinlay A.A."/>
            <person name="Siddaramappa S."/>
            <person name="Challacombe J.F."/>
            <person name="Lowry S.R."/>
            <person name="Clum A."/>
            <person name="Lapidus A.L."/>
            <person name="Burkhart K.B."/>
            <person name="Harkins V."/>
            <person name="Vieille C."/>
        </authorList>
    </citation>
    <scope>NUCLEOTIDE SEQUENCE [LARGE SCALE GENOMIC DNA]</scope>
    <source>
        <strain>ATCC 55618 / DSM 22257 / CCUG 43843 / 130Z</strain>
    </source>
</reference>
<protein>
    <recommendedName>
        <fullName evidence="1">Small ribosomal subunit protein uS9</fullName>
    </recommendedName>
    <alternativeName>
        <fullName evidence="2">30S ribosomal protein S9</fullName>
    </alternativeName>
</protein>
<sequence length="131" mass="14773">MTAANQNYGTGRRKSSSARVFIKPGNGKITINQRSLEVYFGRETSRMIVRQPLELVELTDKLDLYITVKGGGISGQAGAIRHGITRALMEYDESLRPALRAAGFVTRDARRVERKKVGLHKARRRPQYSKR</sequence>
<name>RS9_ACTSZ</name>
<gene>
    <name evidence="1" type="primary">rpsI</name>
    <name type="ordered locus">Asuc_1493</name>
</gene>
<proteinExistence type="inferred from homology"/>
<organism>
    <name type="scientific">Actinobacillus succinogenes (strain ATCC 55618 / DSM 22257 / CCUG 43843 / 130Z)</name>
    <dbReference type="NCBI Taxonomy" id="339671"/>
    <lineage>
        <taxon>Bacteria</taxon>
        <taxon>Pseudomonadati</taxon>
        <taxon>Pseudomonadota</taxon>
        <taxon>Gammaproteobacteria</taxon>
        <taxon>Pasteurellales</taxon>
        <taxon>Pasteurellaceae</taxon>
        <taxon>Actinobacillus</taxon>
    </lineage>
</organism>
<accession>A6VPF4</accession>
<comment type="similarity">
    <text evidence="1">Belongs to the universal ribosomal protein uS9 family.</text>
</comment>
<keyword id="KW-1185">Reference proteome</keyword>
<keyword id="KW-0687">Ribonucleoprotein</keyword>
<keyword id="KW-0689">Ribosomal protein</keyword>